<gene>
    <name type="primary">PPE65</name>
    <name type="ordered locus">Rv3621c</name>
</gene>
<feature type="chain" id="PRO_0000378487" description="Uncharacterized PPE family protein PPE65">
    <location>
        <begin position="1"/>
        <end position="413"/>
    </location>
</feature>
<reference key="1">
    <citation type="journal article" date="1998" name="Nature">
        <title>Deciphering the biology of Mycobacterium tuberculosis from the complete genome sequence.</title>
        <authorList>
            <person name="Cole S.T."/>
            <person name="Brosch R."/>
            <person name="Parkhill J."/>
            <person name="Garnier T."/>
            <person name="Churcher C.M."/>
            <person name="Harris D.E."/>
            <person name="Gordon S.V."/>
            <person name="Eiglmeier K."/>
            <person name="Gas S."/>
            <person name="Barry C.E. III"/>
            <person name="Tekaia F."/>
            <person name="Badcock K."/>
            <person name="Basham D."/>
            <person name="Brown D."/>
            <person name="Chillingworth T."/>
            <person name="Connor R."/>
            <person name="Davies R.M."/>
            <person name="Devlin K."/>
            <person name="Feltwell T."/>
            <person name="Gentles S."/>
            <person name="Hamlin N."/>
            <person name="Holroyd S."/>
            <person name="Hornsby T."/>
            <person name="Jagels K."/>
            <person name="Krogh A."/>
            <person name="McLean J."/>
            <person name="Moule S."/>
            <person name="Murphy L.D."/>
            <person name="Oliver S."/>
            <person name="Osborne J."/>
            <person name="Quail M.A."/>
            <person name="Rajandream M.A."/>
            <person name="Rogers J."/>
            <person name="Rutter S."/>
            <person name="Seeger K."/>
            <person name="Skelton S."/>
            <person name="Squares S."/>
            <person name="Squares R."/>
            <person name="Sulston J.E."/>
            <person name="Taylor K."/>
            <person name="Whitehead S."/>
            <person name="Barrell B.G."/>
        </authorList>
    </citation>
    <scope>NUCLEOTIDE SEQUENCE [LARGE SCALE GENOMIC DNA]</scope>
    <source>
        <strain>ATCC 25618 / H37Rv</strain>
    </source>
</reference>
<reference key="2">
    <citation type="journal article" date="2020" name="Science">
        <title>PE/PPE proteins mediate nutrient transport across the outer membrane of Mycobacterium tuberculosis.</title>
        <authorList>
            <person name="Wang Q."/>
            <person name="Boshoff H.I.M."/>
            <person name="Harrison J.R."/>
            <person name="Ray P.C."/>
            <person name="Green S.R."/>
            <person name="Wyatt P.G."/>
            <person name="Barry C.E. III"/>
        </authorList>
    </citation>
    <scope>DISRUPTION PHENOTYPE</scope>
    <source>
        <strain evidence="2">ATCC 27294 / TMC 102 / H37Rv</strain>
    </source>
</reference>
<sequence>MLDFAQLPPEVNSALMYAGPGSGPMLAAAAAWEALAAELQTTASTYDALITGLADGPWQGSSAASMVAAATPQVAWLRSTAGQAEQAGSQAVAAASAYEAAFFATVPPPEIAANRALLMALLATNFLGQNTAAIAATEAQYAEMWAQDAAAMYGYAGASAAATQLSPFNPAAQTINPAGLASQAASVGQAVSGAANAQALTDIPKALFGLSGIFTNEPPWLTDLGKALGLTGHTWSSDGSGLIVGGVLGDFVQGVTGSAELDASVAMDTFGKWVSPARLMVTQFKDYFGLAHDLPKWASEGAKAAGEAAKALPAAVPAIPSAGLSGVAGAVGQAASVGGLKVPAVWTATTPAASPAVLAASNGLGAAAAAEGSTHAFGGMPLMGSGAGRAFNNFAAPRYGFKPTVIAQPPAGG</sequence>
<accession>P9WHX3</accession>
<accession>L0TDB9</accession>
<accession>Q6MWV5</accession>
<accession>Q7D569</accession>
<dbReference type="EMBL" id="AL123456">
    <property type="protein sequence ID" value="CCP46444.1"/>
    <property type="molecule type" value="Genomic_DNA"/>
</dbReference>
<dbReference type="PIR" id="F70560">
    <property type="entry name" value="F70560"/>
</dbReference>
<dbReference type="RefSeq" id="WP_003900723.1">
    <property type="nucleotide sequence ID" value="NZ_NVQJ01000045.1"/>
</dbReference>
<dbReference type="RefSeq" id="YP_177998.1">
    <property type="nucleotide sequence ID" value="NC_000962.3"/>
</dbReference>
<dbReference type="SMR" id="P9WHX3"/>
<dbReference type="STRING" id="83332.Rv3621c"/>
<dbReference type="TCDB" id="1.B.94.1.4">
    <property type="family name" value="the pro-pro-glu outer membrane porin (ppe) family"/>
</dbReference>
<dbReference type="PaxDb" id="83332-Rv3621c"/>
<dbReference type="DNASU" id="885097"/>
<dbReference type="GeneID" id="885097"/>
<dbReference type="KEGG" id="mtu:Rv3621c"/>
<dbReference type="KEGG" id="mtv:RVBD_3621c"/>
<dbReference type="TubercuList" id="Rv3621c"/>
<dbReference type="eggNOG" id="COG5651">
    <property type="taxonomic scope" value="Bacteria"/>
</dbReference>
<dbReference type="InParanoid" id="P9WHX3"/>
<dbReference type="OrthoDB" id="4761354at2"/>
<dbReference type="PhylomeDB" id="P9WHX3"/>
<dbReference type="Proteomes" id="UP000001584">
    <property type="component" value="Chromosome"/>
</dbReference>
<dbReference type="GO" id="GO:0035435">
    <property type="term" value="P:phosphate ion transmembrane transport"/>
    <property type="evidence" value="ECO:0000316"/>
    <property type="project" value="UniProtKB"/>
</dbReference>
<dbReference type="GO" id="GO:0052572">
    <property type="term" value="P:response to host immune response"/>
    <property type="evidence" value="ECO:0000318"/>
    <property type="project" value="GO_Central"/>
</dbReference>
<dbReference type="FunFam" id="1.20.1260.20:FF:000001">
    <property type="entry name" value="PPE family protein PPE41"/>
    <property type="match status" value="1"/>
</dbReference>
<dbReference type="Gene3D" id="1.20.1260.20">
    <property type="entry name" value="PPE superfamily"/>
    <property type="match status" value="1"/>
</dbReference>
<dbReference type="InterPro" id="IPR022171">
    <property type="entry name" value="PPE_C"/>
</dbReference>
<dbReference type="InterPro" id="IPR000030">
    <property type="entry name" value="PPE_dom"/>
</dbReference>
<dbReference type="InterPro" id="IPR038332">
    <property type="entry name" value="PPE_sf"/>
</dbReference>
<dbReference type="PANTHER" id="PTHR46766">
    <property type="entry name" value="GLUTAMINE-RICH PROTEIN 2"/>
    <property type="match status" value="1"/>
</dbReference>
<dbReference type="PANTHER" id="PTHR46766:SF1">
    <property type="entry name" value="GLUTAMINE-RICH PROTEIN 2"/>
    <property type="match status" value="1"/>
</dbReference>
<dbReference type="Pfam" id="PF00823">
    <property type="entry name" value="PPE"/>
    <property type="match status" value="1"/>
</dbReference>
<dbReference type="Pfam" id="PF12484">
    <property type="entry name" value="PPE-SVP"/>
    <property type="match status" value="1"/>
</dbReference>
<dbReference type="SUPFAM" id="SSF140459">
    <property type="entry name" value="PE/PPE dimer-like"/>
    <property type="match status" value="1"/>
</dbReference>
<name>PPE65_MYCTU</name>
<evidence type="ECO:0000269" key="1">
    <source>
    </source>
</evidence>
<evidence type="ECO:0000303" key="2">
    <source>
    </source>
</evidence>
<evidence type="ECO:0000305" key="3"/>
<organism>
    <name type="scientific">Mycobacterium tuberculosis (strain ATCC 25618 / H37Rv)</name>
    <dbReference type="NCBI Taxonomy" id="83332"/>
    <lineage>
        <taxon>Bacteria</taxon>
        <taxon>Bacillati</taxon>
        <taxon>Actinomycetota</taxon>
        <taxon>Actinomycetes</taxon>
        <taxon>Mycobacteriales</taxon>
        <taxon>Mycobacteriaceae</taxon>
        <taxon>Mycobacterium</taxon>
        <taxon>Mycobacterium tuberculosis complex</taxon>
    </lineage>
</organism>
<protein>
    <recommendedName>
        <fullName>Uncharacterized PPE family protein PPE65</fullName>
    </recommendedName>
</protein>
<keyword id="KW-1185">Reference proteome</keyword>
<proteinExistence type="inferred from homology"/>
<comment type="disruption phenotype">
    <text evidence="1">Knockdown of this gene in cells with simultaneous deletion of PPE25/PE18/PPE26/PPE27/PE19 genes result in a severely impaired growth in phosphate-limiting media.</text>
</comment>
<comment type="similarity">
    <text evidence="3">Belongs to the mycobacterial PPE family.</text>
</comment>